<protein>
    <recommendedName>
        <fullName evidence="1">Bifunctional protein GlmU</fullName>
    </recommendedName>
    <domain>
        <recommendedName>
            <fullName evidence="1">UDP-N-acetylglucosamine pyrophosphorylase</fullName>
            <ecNumber evidence="1">2.7.7.23</ecNumber>
        </recommendedName>
        <alternativeName>
            <fullName evidence="1">N-acetylglucosamine-1-phosphate uridyltransferase</fullName>
        </alternativeName>
    </domain>
    <domain>
        <recommendedName>
            <fullName evidence="1">Glucosamine-1-phosphate N-acetyltransferase</fullName>
            <ecNumber evidence="1">2.3.1.157</ecNumber>
        </recommendedName>
    </domain>
</protein>
<evidence type="ECO:0000255" key="1">
    <source>
        <dbReference type="HAMAP-Rule" id="MF_01631"/>
    </source>
</evidence>
<keyword id="KW-0012">Acyltransferase</keyword>
<keyword id="KW-0133">Cell shape</keyword>
<keyword id="KW-0961">Cell wall biogenesis/degradation</keyword>
<keyword id="KW-0963">Cytoplasm</keyword>
<keyword id="KW-0460">Magnesium</keyword>
<keyword id="KW-0479">Metal-binding</keyword>
<keyword id="KW-0511">Multifunctional enzyme</keyword>
<keyword id="KW-0548">Nucleotidyltransferase</keyword>
<keyword id="KW-0573">Peptidoglycan synthesis</keyword>
<keyword id="KW-1185">Reference proteome</keyword>
<keyword id="KW-0677">Repeat</keyword>
<keyword id="KW-0808">Transferase</keyword>
<sequence>MLDIVIMAAGKGTRMKSSRPKVLHTLAGRALLQHVLATAAGLGAQRLITITGHGAEQVEAAMRSAFPAAPLAFVRQEPQLGTGHAVQQAVPLLDDAGTTLILNGDTPLIEASTARALVDACDGTRLALLTIDLADPTGYGRILRDGDGRGEKLLGIVEHKDASAEQRAVREVYTGMMAAPTALLKRWLACLSNDNAQREYYLTDVVAMAVADGVAVVAAQPASETEVLGVNSPLQLADLERRLQRKQAEALLEAGVRLADPARFDLRGTLGCGSDVEIDVNCVFEGRVELGDGVRIGAHCVIRDARIAAGAVIHPFTHIDGAEVGAGALVGPFARLRPGAELGAEVHIGNFVEVKNSTLARGAKANHLAYLGDATVGERVNYGAGSITANYDGANKHRTVIGDDVHVGSNCVLVAPVTLGAGATIGGGSTISKDVPAGQLGVARARQTVIAGWQRPQKKR</sequence>
<gene>
    <name evidence="1" type="primary">glmU</name>
    <name type="ordered locus">Mpe_A0557</name>
</gene>
<accession>A2SD80</accession>
<comment type="function">
    <text evidence="1">Catalyzes the last two sequential reactions in the de novo biosynthetic pathway for UDP-N-acetylglucosamine (UDP-GlcNAc). The C-terminal domain catalyzes the transfer of acetyl group from acetyl coenzyme A to glucosamine-1-phosphate (GlcN-1-P) to produce N-acetylglucosamine-1-phosphate (GlcNAc-1-P), which is converted into UDP-GlcNAc by the transfer of uridine 5-monophosphate (from uridine 5-triphosphate), a reaction catalyzed by the N-terminal domain.</text>
</comment>
<comment type="catalytic activity">
    <reaction evidence="1">
        <text>alpha-D-glucosamine 1-phosphate + acetyl-CoA = N-acetyl-alpha-D-glucosamine 1-phosphate + CoA + H(+)</text>
        <dbReference type="Rhea" id="RHEA:13725"/>
        <dbReference type="ChEBI" id="CHEBI:15378"/>
        <dbReference type="ChEBI" id="CHEBI:57287"/>
        <dbReference type="ChEBI" id="CHEBI:57288"/>
        <dbReference type="ChEBI" id="CHEBI:57776"/>
        <dbReference type="ChEBI" id="CHEBI:58516"/>
        <dbReference type="EC" id="2.3.1.157"/>
    </reaction>
</comment>
<comment type="catalytic activity">
    <reaction evidence="1">
        <text>N-acetyl-alpha-D-glucosamine 1-phosphate + UTP + H(+) = UDP-N-acetyl-alpha-D-glucosamine + diphosphate</text>
        <dbReference type="Rhea" id="RHEA:13509"/>
        <dbReference type="ChEBI" id="CHEBI:15378"/>
        <dbReference type="ChEBI" id="CHEBI:33019"/>
        <dbReference type="ChEBI" id="CHEBI:46398"/>
        <dbReference type="ChEBI" id="CHEBI:57705"/>
        <dbReference type="ChEBI" id="CHEBI:57776"/>
        <dbReference type="EC" id="2.7.7.23"/>
    </reaction>
</comment>
<comment type="cofactor">
    <cofactor evidence="1">
        <name>Mg(2+)</name>
        <dbReference type="ChEBI" id="CHEBI:18420"/>
    </cofactor>
    <text evidence="1">Binds 1 Mg(2+) ion per subunit.</text>
</comment>
<comment type="pathway">
    <text evidence="1">Nucleotide-sugar biosynthesis; UDP-N-acetyl-alpha-D-glucosamine biosynthesis; N-acetyl-alpha-D-glucosamine 1-phosphate from alpha-D-glucosamine 6-phosphate (route II): step 2/2.</text>
</comment>
<comment type="pathway">
    <text evidence="1">Nucleotide-sugar biosynthesis; UDP-N-acetyl-alpha-D-glucosamine biosynthesis; UDP-N-acetyl-alpha-D-glucosamine from N-acetyl-alpha-D-glucosamine 1-phosphate: step 1/1.</text>
</comment>
<comment type="pathway">
    <text evidence="1">Bacterial outer membrane biogenesis; LPS lipid A biosynthesis.</text>
</comment>
<comment type="subunit">
    <text evidence="1">Homotrimer.</text>
</comment>
<comment type="subcellular location">
    <subcellularLocation>
        <location evidence="1">Cytoplasm</location>
    </subcellularLocation>
</comment>
<comment type="similarity">
    <text evidence="1">In the N-terminal section; belongs to the N-acetylglucosamine-1-phosphate uridyltransferase family.</text>
</comment>
<comment type="similarity">
    <text evidence="1">In the C-terminal section; belongs to the transferase hexapeptide repeat family.</text>
</comment>
<organism>
    <name type="scientific">Methylibium petroleiphilum (strain ATCC BAA-1232 / LMG 22953 / PM1)</name>
    <dbReference type="NCBI Taxonomy" id="420662"/>
    <lineage>
        <taxon>Bacteria</taxon>
        <taxon>Pseudomonadati</taxon>
        <taxon>Pseudomonadota</taxon>
        <taxon>Betaproteobacteria</taxon>
        <taxon>Burkholderiales</taxon>
        <taxon>Sphaerotilaceae</taxon>
        <taxon>Methylibium</taxon>
    </lineage>
</organism>
<name>GLMU_METPP</name>
<feature type="chain" id="PRO_0000337727" description="Bifunctional protein GlmU">
    <location>
        <begin position="1"/>
        <end position="460"/>
    </location>
</feature>
<feature type="region of interest" description="Pyrophosphorylase" evidence="1">
    <location>
        <begin position="1"/>
        <end position="233"/>
    </location>
</feature>
<feature type="region of interest" description="Linker" evidence="1">
    <location>
        <begin position="234"/>
        <end position="254"/>
    </location>
</feature>
<feature type="region of interest" description="N-acetyltransferase" evidence="1">
    <location>
        <begin position="255"/>
        <end position="460"/>
    </location>
</feature>
<feature type="active site" description="Proton acceptor" evidence="1">
    <location>
        <position position="367"/>
    </location>
</feature>
<feature type="binding site" evidence="1">
    <location>
        <position position="21"/>
    </location>
    <ligand>
        <name>UDP-N-acetyl-alpha-D-glucosamine</name>
        <dbReference type="ChEBI" id="CHEBI:57705"/>
    </ligand>
</feature>
<feature type="binding site" evidence="1">
    <location>
        <position position="76"/>
    </location>
    <ligand>
        <name>UDP-N-acetyl-alpha-D-glucosamine</name>
        <dbReference type="ChEBI" id="CHEBI:57705"/>
    </ligand>
</feature>
<feature type="binding site" evidence="1">
    <location>
        <begin position="81"/>
        <end position="82"/>
    </location>
    <ligand>
        <name>UDP-N-acetyl-alpha-D-glucosamine</name>
        <dbReference type="ChEBI" id="CHEBI:57705"/>
    </ligand>
</feature>
<feature type="binding site" evidence="1">
    <location>
        <position position="105"/>
    </location>
    <ligand>
        <name>Mg(2+)</name>
        <dbReference type="ChEBI" id="CHEBI:18420"/>
    </ligand>
</feature>
<feature type="binding site" evidence="1">
    <location>
        <position position="140"/>
    </location>
    <ligand>
        <name>UDP-N-acetyl-alpha-D-glucosamine</name>
        <dbReference type="ChEBI" id="CHEBI:57705"/>
    </ligand>
</feature>
<feature type="binding site" evidence="1">
    <location>
        <position position="158"/>
    </location>
    <ligand>
        <name>UDP-N-acetyl-alpha-D-glucosamine</name>
        <dbReference type="ChEBI" id="CHEBI:57705"/>
    </ligand>
</feature>
<feature type="binding site" evidence="1">
    <location>
        <position position="231"/>
    </location>
    <ligand>
        <name>Mg(2+)</name>
        <dbReference type="ChEBI" id="CHEBI:18420"/>
    </ligand>
</feature>
<feature type="binding site" evidence="1">
    <location>
        <position position="231"/>
    </location>
    <ligand>
        <name>UDP-N-acetyl-alpha-D-glucosamine</name>
        <dbReference type="ChEBI" id="CHEBI:57705"/>
    </ligand>
</feature>
<feature type="binding site" evidence="1">
    <location>
        <position position="337"/>
    </location>
    <ligand>
        <name>UDP-N-acetyl-alpha-D-glucosamine</name>
        <dbReference type="ChEBI" id="CHEBI:57705"/>
    </ligand>
</feature>
<feature type="binding site" evidence="1">
    <location>
        <position position="355"/>
    </location>
    <ligand>
        <name>UDP-N-acetyl-alpha-D-glucosamine</name>
        <dbReference type="ChEBI" id="CHEBI:57705"/>
    </ligand>
</feature>
<feature type="binding site" evidence="1">
    <location>
        <position position="370"/>
    </location>
    <ligand>
        <name>UDP-N-acetyl-alpha-D-glucosamine</name>
        <dbReference type="ChEBI" id="CHEBI:57705"/>
    </ligand>
</feature>
<feature type="binding site" evidence="1">
    <location>
        <position position="381"/>
    </location>
    <ligand>
        <name>UDP-N-acetyl-alpha-D-glucosamine</name>
        <dbReference type="ChEBI" id="CHEBI:57705"/>
    </ligand>
</feature>
<feature type="binding site" evidence="1">
    <location>
        <position position="384"/>
    </location>
    <ligand>
        <name>acetyl-CoA</name>
        <dbReference type="ChEBI" id="CHEBI:57288"/>
    </ligand>
</feature>
<feature type="binding site" evidence="1">
    <location>
        <begin position="390"/>
        <end position="391"/>
    </location>
    <ligand>
        <name>acetyl-CoA</name>
        <dbReference type="ChEBI" id="CHEBI:57288"/>
    </ligand>
</feature>
<feature type="binding site" evidence="1">
    <location>
        <position position="409"/>
    </location>
    <ligand>
        <name>acetyl-CoA</name>
        <dbReference type="ChEBI" id="CHEBI:57288"/>
    </ligand>
</feature>
<feature type="binding site" evidence="1">
    <location>
        <position position="427"/>
    </location>
    <ligand>
        <name>acetyl-CoA</name>
        <dbReference type="ChEBI" id="CHEBI:57288"/>
    </ligand>
</feature>
<feature type="binding site" evidence="1">
    <location>
        <position position="444"/>
    </location>
    <ligand>
        <name>acetyl-CoA</name>
        <dbReference type="ChEBI" id="CHEBI:57288"/>
    </ligand>
</feature>
<proteinExistence type="inferred from homology"/>
<dbReference type="EC" id="2.7.7.23" evidence="1"/>
<dbReference type="EC" id="2.3.1.157" evidence="1"/>
<dbReference type="EMBL" id="CP000555">
    <property type="protein sequence ID" value="ABM93519.1"/>
    <property type="molecule type" value="Genomic_DNA"/>
</dbReference>
<dbReference type="RefSeq" id="WP_011828157.1">
    <property type="nucleotide sequence ID" value="NC_008825.1"/>
</dbReference>
<dbReference type="SMR" id="A2SD80"/>
<dbReference type="STRING" id="420662.Mpe_A0557"/>
<dbReference type="KEGG" id="mpt:Mpe_A0557"/>
<dbReference type="eggNOG" id="COG1207">
    <property type="taxonomic scope" value="Bacteria"/>
</dbReference>
<dbReference type="HOGENOM" id="CLU_029499_15_2_4"/>
<dbReference type="UniPathway" id="UPA00113">
    <property type="reaction ID" value="UER00532"/>
</dbReference>
<dbReference type="UniPathway" id="UPA00113">
    <property type="reaction ID" value="UER00533"/>
</dbReference>
<dbReference type="UniPathway" id="UPA00973"/>
<dbReference type="Proteomes" id="UP000000366">
    <property type="component" value="Chromosome"/>
</dbReference>
<dbReference type="GO" id="GO:0005737">
    <property type="term" value="C:cytoplasm"/>
    <property type="evidence" value="ECO:0007669"/>
    <property type="project" value="UniProtKB-SubCell"/>
</dbReference>
<dbReference type="GO" id="GO:0016020">
    <property type="term" value="C:membrane"/>
    <property type="evidence" value="ECO:0007669"/>
    <property type="project" value="GOC"/>
</dbReference>
<dbReference type="GO" id="GO:0019134">
    <property type="term" value="F:glucosamine-1-phosphate N-acetyltransferase activity"/>
    <property type="evidence" value="ECO:0007669"/>
    <property type="project" value="UniProtKB-UniRule"/>
</dbReference>
<dbReference type="GO" id="GO:0000287">
    <property type="term" value="F:magnesium ion binding"/>
    <property type="evidence" value="ECO:0007669"/>
    <property type="project" value="UniProtKB-UniRule"/>
</dbReference>
<dbReference type="GO" id="GO:0003977">
    <property type="term" value="F:UDP-N-acetylglucosamine diphosphorylase activity"/>
    <property type="evidence" value="ECO:0007669"/>
    <property type="project" value="UniProtKB-UniRule"/>
</dbReference>
<dbReference type="GO" id="GO:0000902">
    <property type="term" value="P:cell morphogenesis"/>
    <property type="evidence" value="ECO:0007669"/>
    <property type="project" value="UniProtKB-UniRule"/>
</dbReference>
<dbReference type="GO" id="GO:0071555">
    <property type="term" value="P:cell wall organization"/>
    <property type="evidence" value="ECO:0007669"/>
    <property type="project" value="UniProtKB-KW"/>
</dbReference>
<dbReference type="GO" id="GO:0009245">
    <property type="term" value="P:lipid A biosynthetic process"/>
    <property type="evidence" value="ECO:0007669"/>
    <property type="project" value="UniProtKB-UniRule"/>
</dbReference>
<dbReference type="GO" id="GO:0009252">
    <property type="term" value="P:peptidoglycan biosynthetic process"/>
    <property type="evidence" value="ECO:0007669"/>
    <property type="project" value="UniProtKB-UniRule"/>
</dbReference>
<dbReference type="GO" id="GO:0008360">
    <property type="term" value="P:regulation of cell shape"/>
    <property type="evidence" value="ECO:0007669"/>
    <property type="project" value="UniProtKB-KW"/>
</dbReference>
<dbReference type="GO" id="GO:0006048">
    <property type="term" value="P:UDP-N-acetylglucosamine biosynthetic process"/>
    <property type="evidence" value="ECO:0007669"/>
    <property type="project" value="UniProtKB-UniPathway"/>
</dbReference>
<dbReference type="CDD" id="cd02540">
    <property type="entry name" value="GT2_GlmU_N_bac"/>
    <property type="match status" value="1"/>
</dbReference>
<dbReference type="CDD" id="cd03353">
    <property type="entry name" value="LbH_GlmU_C"/>
    <property type="match status" value="1"/>
</dbReference>
<dbReference type="Gene3D" id="2.160.10.10">
    <property type="entry name" value="Hexapeptide repeat proteins"/>
    <property type="match status" value="1"/>
</dbReference>
<dbReference type="Gene3D" id="3.90.550.10">
    <property type="entry name" value="Spore Coat Polysaccharide Biosynthesis Protein SpsA, Chain A"/>
    <property type="match status" value="1"/>
</dbReference>
<dbReference type="HAMAP" id="MF_01631">
    <property type="entry name" value="GlmU"/>
    <property type="match status" value="1"/>
</dbReference>
<dbReference type="InterPro" id="IPR005882">
    <property type="entry name" value="Bifunctional_GlmU"/>
</dbReference>
<dbReference type="InterPro" id="IPR050065">
    <property type="entry name" value="GlmU-like"/>
</dbReference>
<dbReference type="InterPro" id="IPR038009">
    <property type="entry name" value="GlmU_C_LbH"/>
</dbReference>
<dbReference type="InterPro" id="IPR001451">
    <property type="entry name" value="Hexapep"/>
</dbReference>
<dbReference type="InterPro" id="IPR025877">
    <property type="entry name" value="MobA-like_NTP_Trfase"/>
</dbReference>
<dbReference type="InterPro" id="IPR029044">
    <property type="entry name" value="Nucleotide-diphossugar_trans"/>
</dbReference>
<dbReference type="InterPro" id="IPR011004">
    <property type="entry name" value="Trimer_LpxA-like_sf"/>
</dbReference>
<dbReference type="NCBIfam" id="TIGR01173">
    <property type="entry name" value="glmU"/>
    <property type="match status" value="1"/>
</dbReference>
<dbReference type="PANTHER" id="PTHR43584:SF3">
    <property type="entry name" value="BIFUNCTIONAL PROTEIN GLMU"/>
    <property type="match status" value="1"/>
</dbReference>
<dbReference type="PANTHER" id="PTHR43584">
    <property type="entry name" value="NUCLEOTIDYL TRANSFERASE"/>
    <property type="match status" value="1"/>
</dbReference>
<dbReference type="Pfam" id="PF00132">
    <property type="entry name" value="Hexapep"/>
    <property type="match status" value="2"/>
</dbReference>
<dbReference type="Pfam" id="PF12804">
    <property type="entry name" value="NTP_transf_3"/>
    <property type="match status" value="1"/>
</dbReference>
<dbReference type="SUPFAM" id="SSF53448">
    <property type="entry name" value="Nucleotide-diphospho-sugar transferases"/>
    <property type="match status" value="1"/>
</dbReference>
<dbReference type="SUPFAM" id="SSF51161">
    <property type="entry name" value="Trimeric LpxA-like enzymes"/>
    <property type="match status" value="1"/>
</dbReference>
<reference key="1">
    <citation type="journal article" date="2007" name="J. Bacteriol.">
        <title>Whole-genome analysis of the methyl tert-butyl ether-degrading beta-proteobacterium Methylibium petroleiphilum PM1.</title>
        <authorList>
            <person name="Kane S.R."/>
            <person name="Chakicherla A.Y."/>
            <person name="Chain P.S.G."/>
            <person name="Schmidt R."/>
            <person name="Shin M.W."/>
            <person name="Legler T.C."/>
            <person name="Scow K.M."/>
            <person name="Larimer F.W."/>
            <person name="Lucas S.M."/>
            <person name="Richardson P.M."/>
            <person name="Hristova K.R."/>
        </authorList>
    </citation>
    <scope>NUCLEOTIDE SEQUENCE [LARGE SCALE GENOMIC DNA]</scope>
    <source>
        <strain>ATCC BAA-1232 / LMG 22953 / PM1</strain>
    </source>
</reference>